<name>ZNF57_HUMAN</name>
<feature type="chain" id="PRO_0000274878" description="Zinc finger protein 57">
    <location>
        <begin position="1"/>
        <end position="555"/>
    </location>
</feature>
<feature type="domain" description="KRAB" evidence="2">
    <location>
        <begin position="4"/>
        <end position="76"/>
    </location>
</feature>
<feature type="zinc finger region" description="C2H2-type 1" evidence="1">
    <location>
        <begin position="140"/>
        <end position="162"/>
    </location>
</feature>
<feature type="zinc finger region" description="C2H2-type 2; degenerate" evidence="1">
    <location>
        <begin position="196"/>
        <end position="218"/>
    </location>
</feature>
<feature type="zinc finger region" description="C2H2-type 3" evidence="1">
    <location>
        <begin position="224"/>
        <end position="246"/>
    </location>
</feature>
<feature type="zinc finger region" description="C2H2-type 4" evidence="1">
    <location>
        <begin position="252"/>
        <end position="274"/>
    </location>
</feature>
<feature type="zinc finger region" description="C2H2-type 5" evidence="1">
    <location>
        <begin position="280"/>
        <end position="302"/>
    </location>
</feature>
<feature type="zinc finger region" description="C2H2-type 6" evidence="1">
    <location>
        <begin position="308"/>
        <end position="330"/>
    </location>
</feature>
<feature type="zinc finger region" description="C2H2-type 7" evidence="1">
    <location>
        <begin position="336"/>
        <end position="358"/>
    </location>
</feature>
<feature type="zinc finger region" description="C2H2-type 8" evidence="1">
    <location>
        <begin position="364"/>
        <end position="386"/>
    </location>
</feature>
<feature type="zinc finger region" description="C2H2-type 9" evidence="1">
    <location>
        <begin position="392"/>
        <end position="414"/>
    </location>
</feature>
<feature type="zinc finger region" description="C2H2-type 10" evidence="1">
    <location>
        <begin position="420"/>
        <end position="442"/>
    </location>
</feature>
<feature type="zinc finger region" description="C2H2-type 11" evidence="1">
    <location>
        <begin position="448"/>
        <end position="470"/>
    </location>
</feature>
<feature type="zinc finger region" description="C2H2-type 12" evidence="1">
    <location>
        <begin position="476"/>
        <end position="498"/>
    </location>
</feature>
<feature type="zinc finger region" description="C2H2-type 13" evidence="1">
    <location>
        <begin position="504"/>
        <end position="526"/>
    </location>
</feature>
<feature type="sequence variant" id="VAR_052760" description="In dbSNP:rs2288958.">
    <original>T</original>
    <variation>N</variation>
    <location>
        <position position="223"/>
    </location>
</feature>
<feature type="sequence variant" id="VAR_052761" description="In dbSNP:rs2288957.">
    <original>R</original>
    <variation>W</variation>
    <location>
        <position position="230"/>
    </location>
</feature>
<feature type="sequence variant" id="VAR_061931" description="In dbSNP:rs55682587.">
    <original>T</original>
    <variation>M</variation>
    <location>
        <position position="357"/>
    </location>
</feature>
<feature type="sequence conflict" description="In Ref. 1; CAH18455." evidence="3" ref="1">
    <original>C</original>
    <variation>R</variation>
    <location>
        <position position="198"/>
    </location>
</feature>
<keyword id="KW-0238">DNA-binding</keyword>
<keyword id="KW-0479">Metal-binding</keyword>
<keyword id="KW-0539">Nucleus</keyword>
<keyword id="KW-1267">Proteomics identification</keyword>
<keyword id="KW-1185">Reference proteome</keyword>
<keyword id="KW-0677">Repeat</keyword>
<keyword id="KW-0804">Transcription</keyword>
<keyword id="KW-0805">Transcription regulation</keyword>
<keyword id="KW-0862">Zinc</keyword>
<keyword id="KW-0863">Zinc-finger</keyword>
<protein>
    <recommendedName>
        <fullName>Zinc finger protein 57</fullName>
    </recommendedName>
    <alternativeName>
        <fullName>Zinc finger protein 424</fullName>
    </alternativeName>
</protein>
<organism>
    <name type="scientific">Homo sapiens</name>
    <name type="common">Human</name>
    <dbReference type="NCBI Taxonomy" id="9606"/>
    <lineage>
        <taxon>Eukaryota</taxon>
        <taxon>Metazoa</taxon>
        <taxon>Chordata</taxon>
        <taxon>Craniata</taxon>
        <taxon>Vertebrata</taxon>
        <taxon>Euteleostomi</taxon>
        <taxon>Mammalia</taxon>
        <taxon>Eutheria</taxon>
        <taxon>Euarchontoglires</taxon>
        <taxon>Primates</taxon>
        <taxon>Haplorrhini</taxon>
        <taxon>Catarrhini</taxon>
        <taxon>Hominidae</taxon>
        <taxon>Homo</taxon>
    </lineage>
</organism>
<evidence type="ECO:0000255" key="1">
    <source>
        <dbReference type="PROSITE-ProRule" id="PRU00042"/>
    </source>
</evidence>
<evidence type="ECO:0000255" key="2">
    <source>
        <dbReference type="PROSITE-ProRule" id="PRU00119"/>
    </source>
</evidence>
<evidence type="ECO:0000305" key="3"/>
<gene>
    <name type="primary">ZNF57</name>
    <name type="synonym">ZNF424</name>
</gene>
<proteinExistence type="evidence at protein level"/>
<reference key="1">
    <citation type="journal article" date="2007" name="BMC Genomics">
        <title>The full-ORF clone resource of the German cDNA consortium.</title>
        <authorList>
            <person name="Bechtel S."/>
            <person name="Rosenfelder H."/>
            <person name="Duda A."/>
            <person name="Schmidt C.P."/>
            <person name="Ernst U."/>
            <person name="Wellenreuther R."/>
            <person name="Mehrle A."/>
            <person name="Schuster C."/>
            <person name="Bahr A."/>
            <person name="Bloecker H."/>
            <person name="Heubner D."/>
            <person name="Hoerlein A."/>
            <person name="Michel G."/>
            <person name="Wedler H."/>
            <person name="Koehrer K."/>
            <person name="Ottenwaelder B."/>
            <person name="Poustka A."/>
            <person name="Wiemann S."/>
            <person name="Schupp I."/>
        </authorList>
    </citation>
    <scope>NUCLEOTIDE SEQUENCE [LARGE SCALE MRNA]</scope>
    <source>
        <tissue>Endometrium</tissue>
    </source>
</reference>
<reference key="2">
    <citation type="journal article" date="2004" name="Genome Res.">
        <title>The status, quality, and expansion of the NIH full-length cDNA project: the Mammalian Gene Collection (MGC).</title>
        <authorList>
            <consortium name="The MGC Project Team"/>
        </authorList>
    </citation>
    <scope>NUCLEOTIDE SEQUENCE [LARGE SCALE MRNA]</scope>
    <source>
        <tissue>Cervix</tissue>
    </source>
</reference>
<dbReference type="EMBL" id="BX537601">
    <property type="protein sequence ID" value="CAH18455.2"/>
    <property type="molecule type" value="mRNA"/>
</dbReference>
<dbReference type="EMBL" id="BC028974">
    <property type="protein sequence ID" value="AAH28974.1"/>
    <property type="molecule type" value="mRNA"/>
</dbReference>
<dbReference type="CCDS" id="CCDS12098.1"/>
<dbReference type="PIR" id="B45193">
    <property type="entry name" value="B45193"/>
</dbReference>
<dbReference type="RefSeq" id="NP_001306012.1">
    <property type="nucleotide sequence ID" value="NM_001319083.1"/>
</dbReference>
<dbReference type="RefSeq" id="NP_775751.1">
    <property type="nucleotide sequence ID" value="NM_173480.3"/>
</dbReference>
<dbReference type="SMR" id="Q68EA5"/>
<dbReference type="BioGRID" id="125974">
    <property type="interactions" value="17"/>
</dbReference>
<dbReference type="FunCoup" id="Q68EA5">
    <property type="interactions" value="25"/>
</dbReference>
<dbReference type="IntAct" id="Q68EA5">
    <property type="interactions" value="28"/>
</dbReference>
<dbReference type="MINT" id="Q68EA5"/>
<dbReference type="STRING" id="9606.ENSP00000303696"/>
<dbReference type="GlyGen" id="Q68EA5">
    <property type="glycosylation" value="1 site, 1 O-linked glycan (1 site)"/>
</dbReference>
<dbReference type="iPTMnet" id="Q68EA5"/>
<dbReference type="PhosphoSitePlus" id="Q68EA5"/>
<dbReference type="BioMuta" id="ZNF57"/>
<dbReference type="DMDM" id="143811479"/>
<dbReference type="jPOST" id="Q68EA5"/>
<dbReference type="MassIVE" id="Q68EA5"/>
<dbReference type="PaxDb" id="9606-ENSP00000303696"/>
<dbReference type="PeptideAtlas" id="Q68EA5"/>
<dbReference type="ProteomicsDB" id="66128"/>
<dbReference type="Antibodypedia" id="10870">
    <property type="antibodies" value="103 antibodies from 15 providers"/>
</dbReference>
<dbReference type="DNASU" id="126295"/>
<dbReference type="Ensembl" id="ENST00000306908.10">
    <property type="protein sequence ID" value="ENSP00000303696.5"/>
    <property type="gene ID" value="ENSG00000171970.14"/>
</dbReference>
<dbReference type="GeneID" id="126295"/>
<dbReference type="KEGG" id="hsa:126295"/>
<dbReference type="MANE-Select" id="ENST00000306908.10">
    <property type="protein sequence ID" value="ENSP00000303696.5"/>
    <property type="RefSeq nucleotide sequence ID" value="NM_173480.3"/>
    <property type="RefSeq protein sequence ID" value="NP_775751.1"/>
</dbReference>
<dbReference type="UCSC" id="uc002lwr.3">
    <property type="organism name" value="human"/>
</dbReference>
<dbReference type="AGR" id="HGNC:13125"/>
<dbReference type="CTD" id="126295"/>
<dbReference type="DisGeNET" id="126295"/>
<dbReference type="GeneCards" id="ZNF57"/>
<dbReference type="HGNC" id="HGNC:13125">
    <property type="gene designation" value="ZNF57"/>
</dbReference>
<dbReference type="HPA" id="ENSG00000171970">
    <property type="expression patterns" value="Tissue enhanced (testis)"/>
</dbReference>
<dbReference type="neXtProt" id="NX_Q68EA5"/>
<dbReference type="OpenTargets" id="ENSG00000171970"/>
<dbReference type="PharmGKB" id="PA37699"/>
<dbReference type="VEuPathDB" id="HostDB:ENSG00000171970"/>
<dbReference type="eggNOG" id="KOG1721">
    <property type="taxonomic scope" value="Eukaryota"/>
</dbReference>
<dbReference type="GeneTree" id="ENSGT00950000182755"/>
<dbReference type="HOGENOM" id="CLU_002678_44_0_1"/>
<dbReference type="InParanoid" id="Q68EA5"/>
<dbReference type="OrthoDB" id="6077919at2759"/>
<dbReference type="PAN-GO" id="Q68EA5">
    <property type="GO annotations" value="4 GO annotations based on evolutionary models"/>
</dbReference>
<dbReference type="PhylomeDB" id="Q68EA5"/>
<dbReference type="TreeFam" id="TF338854"/>
<dbReference type="PathwayCommons" id="Q68EA5"/>
<dbReference type="SignaLink" id="Q68EA5"/>
<dbReference type="BioGRID-ORCS" id="126295">
    <property type="hits" value="14 hits in 1176 CRISPR screens"/>
</dbReference>
<dbReference type="GenomeRNAi" id="126295"/>
<dbReference type="Pharos" id="Q68EA5">
    <property type="development level" value="Tdark"/>
</dbReference>
<dbReference type="PRO" id="PR:Q68EA5"/>
<dbReference type="Proteomes" id="UP000005640">
    <property type="component" value="Chromosome 19"/>
</dbReference>
<dbReference type="RNAct" id="Q68EA5">
    <property type="molecule type" value="protein"/>
</dbReference>
<dbReference type="Bgee" id="ENSG00000171970">
    <property type="expression patterns" value="Expressed in sperm and 141 other cell types or tissues"/>
</dbReference>
<dbReference type="ExpressionAtlas" id="Q68EA5">
    <property type="expression patterns" value="baseline and differential"/>
</dbReference>
<dbReference type="GO" id="GO:0005634">
    <property type="term" value="C:nucleus"/>
    <property type="evidence" value="ECO:0000318"/>
    <property type="project" value="GO_Central"/>
</dbReference>
<dbReference type="GO" id="GO:0000981">
    <property type="term" value="F:DNA-binding transcription factor activity, RNA polymerase II-specific"/>
    <property type="evidence" value="ECO:0000318"/>
    <property type="project" value="GO_Central"/>
</dbReference>
<dbReference type="GO" id="GO:0000977">
    <property type="term" value="F:RNA polymerase II transcription regulatory region sequence-specific DNA binding"/>
    <property type="evidence" value="ECO:0000318"/>
    <property type="project" value="GO_Central"/>
</dbReference>
<dbReference type="GO" id="GO:0008270">
    <property type="term" value="F:zinc ion binding"/>
    <property type="evidence" value="ECO:0007669"/>
    <property type="project" value="UniProtKB-KW"/>
</dbReference>
<dbReference type="GO" id="GO:0006357">
    <property type="term" value="P:regulation of transcription by RNA polymerase II"/>
    <property type="evidence" value="ECO:0000318"/>
    <property type="project" value="GO_Central"/>
</dbReference>
<dbReference type="CDD" id="cd07765">
    <property type="entry name" value="KRAB_A-box"/>
    <property type="match status" value="1"/>
</dbReference>
<dbReference type="FunFam" id="3.30.160.60:FF:000065">
    <property type="entry name" value="B-cell CLL/lymphoma 6, member B"/>
    <property type="match status" value="1"/>
</dbReference>
<dbReference type="FunFam" id="3.30.160.60:FF:000446">
    <property type="entry name" value="Zinc finger protein"/>
    <property type="match status" value="1"/>
</dbReference>
<dbReference type="FunFam" id="3.30.160.60:FF:000193">
    <property type="entry name" value="Zinc finger protein 300"/>
    <property type="match status" value="1"/>
</dbReference>
<dbReference type="FunFam" id="3.30.160.60:FF:002343">
    <property type="entry name" value="Zinc finger protein 33A"/>
    <property type="match status" value="1"/>
</dbReference>
<dbReference type="FunFam" id="3.30.160.60:FF:000044">
    <property type="entry name" value="zinc finger protein 37 homolog"/>
    <property type="match status" value="4"/>
</dbReference>
<dbReference type="FunFam" id="3.30.160.60:FF:000156">
    <property type="entry name" value="Zinc finger protein 568"/>
    <property type="match status" value="1"/>
</dbReference>
<dbReference type="FunFam" id="3.30.160.60:FF:001587">
    <property type="entry name" value="Zinc finger protein 57"/>
    <property type="match status" value="3"/>
</dbReference>
<dbReference type="FunFam" id="3.30.160.60:FF:000710">
    <property type="entry name" value="Zinc finger protein 768"/>
    <property type="match status" value="1"/>
</dbReference>
<dbReference type="Gene3D" id="6.10.140.140">
    <property type="match status" value="1"/>
</dbReference>
<dbReference type="Gene3D" id="3.30.160.60">
    <property type="entry name" value="Classic Zinc Finger"/>
    <property type="match status" value="13"/>
</dbReference>
<dbReference type="InterPro" id="IPR050752">
    <property type="entry name" value="C2H2-ZF_domain"/>
</dbReference>
<dbReference type="InterPro" id="IPR001909">
    <property type="entry name" value="KRAB"/>
</dbReference>
<dbReference type="InterPro" id="IPR036051">
    <property type="entry name" value="KRAB_dom_sf"/>
</dbReference>
<dbReference type="InterPro" id="IPR036236">
    <property type="entry name" value="Znf_C2H2_sf"/>
</dbReference>
<dbReference type="InterPro" id="IPR013087">
    <property type="entry name" value="Znf_C2H2_type"/>
</dbReference>
<dbReference type="PANTHER" id="PTHR24384">
    <property type="entry name" value="FINGER PUTATIVE TRANSCRIPTION FACTOR FAMILY-RELATED"/>
    <property type="match status" value="1"/>
</dbReference>
<dbReference type="PANTHER" id="PTHR24384:SF247">
    <property type="entry name" value="ZINC FINGER PROTEIN 977"/>
    <property type="match status" value="1"/>
</dbReference>
<dbReference type="Pfam" id="PF01352">
    <property type="entry name" value="KRAB"/>
    <property type="match status" value="1"/>
</dbReference>
<dbReference type="Pfam" id="PF00096">
    <property type="entry name" value="zf-C2H2"/>
    <property type="match status" value="11"/>
</dbReference>
<dbReference type="SMART" id="SM00349">
    <property type="entry name" value="KRAB"/>
    <property type="match status" value="1"/>
</dbReference>
<dbReference type="SMART" id="SM00355">
    <property type="entry name" value="ZnF_C2H2"/>
    <property type="match status" value="13"/>
</dbReference>
<dbReference type="SUPFAM" id="SSF57667">
    <property type="entry name" value="beta-beta-alpha zinc fingers"/>
    <property type="match status" value="9"/>
</dbReference>
<dbReference type="SUPFAM" id="SSF109640">
    <property type="entry name" value="KRAB domain (Kruppel-associated box)"/>
    <property type="match status" value="1"/>
</dbReference>
<dbReference type="PROSITE" id="PS50805">
    <property type="entry name" value="KRAB"/>
    <property type="match status" value="1"/>
</dbReference>
<dbReference type="PROSITE" id="PS00028">
    <property type="entry name" value="ZINC_FINGER_C2H2_1"/>
    <property type="match status" value="13"/>
</dbReference>
<dbReference type="PROSITE" id="PS50157">
    <property type="entry name" value="ZINC_FINGER_C2H2_2"/>
    <property type="match status" value="13"/>
</dbReference>
<accession>Q68EA5</accession>
<accession>Q8N6R9</accession>
<sequence length="555" mass="64428">MDSVVFEDVAVDFTLEEWALLDSAQRDLYRDVMLETFRNLASVDDGTQFKANGSVSLQDMYGQEKSKEQTIPNFTGNNSCAYTLEKNCEGYGTEDHHKNLRNHMVDRFCTHNEGNQYGEAIHQMPDLTLHKKVSAGEKPYECTKCRTVFTHLSSLKRHVKSHCGRKAPPGEECKQACICPSHLHSHGRTDTEEKPYKCQACGQTFQHPRYLSHHVKTHTAEKTYKCEQCRMAFNGFASFTRHVRTHTKDRPYKCQECGRAFIYPSTFQRHMTTHTGEKPYKCQHCGKAFTYPQAFQRHEKTHTGEKPYECKQCGKTFSWSETLRVHMRIHTGDKLYKCEHCGKAFTSSRSFQGHLRTHTGEKPYECKQCGKAFTWSSTFREHVRIHTQEQLYKCEQCGKAFTSSRSFRGHLRTHTGEKPYECKQCGKTFTWSSTFREHVRIHTQEQLHKCEHCGKAFTSSRAFQGHLRMHTGEKPYECKQCGKTFTWSSTLHNHVRMHTGEKPHKCKQCGMSFKWHSSFRNHLRMHTGQKSHECQSYSKAFSCQVILSKTSESTH</sequence>
<comment type="function">
    <text>May be involved in transcriptional regulation.</text>
</comment>
<comment type="interaction">
    <interactant intactId="EBI-8490788">
        <id>Q68EA5</id>
    </interactant>
    <interactant intactId="EBI-12011224">
        <id>Q9NPB3</id>
        <label>CABP2</label>
    </interactant>
    <organismsDiffer>false</organismsDiffer>
    <experiments>3</experiments>
</comment>
<comment type="interaction">
    <interactant intactId="EBI-8490788">
        <id>Q68EA5</id>
    </interactant>
    <interactant intactId="EBI-10976677">
        <id>G5E9A7</id>
        <label>DMWD</label>
    </interactant>
    <organismsDiffer>false</organismsDiffer>
    <experiments>3</experiments>
</comment>
<comment type="interaction">
    <interactant intactId="EBI-8490788">
        <id>Q68EA5</id>
    </interactant>
    <interactant intactId="EBI-743414">
        <id>O95967</id>
        <label>EFEMP2</label>
    </interactant>
    <organismsDiffer>false</organismsDiffer>
    <experiments>3</experiments>
</comment>
<comment type="interaction">
    <interactant intactId="EBI-8490788">
        <id>Q68EA5</id>
    </interactant>
    <interactant intactId="EBI-1955541">
        <id>Q53GS7</id>
        <label>GLE1</label>
    </interactant>
    <organismsDiffer>false</organismsDiffer>
    <experiments>3</experiments>
</comment>
<comment type="interaction">
    <interactant intactId="EBI-8490788">
        <id>Q68EA5</id>
    </interactant>
    <interactant intactId="EBI-747754">
        <id>P28799</id>
        <label>GRN</label>
    </interactant>
    <organismsDiffer>false</organismsDiffer>
    <experiments>3</experiments>
</comment>
<comment type="interaction">
    <interactant intactId="EBI-8490788">
        <id>Q68EA5</id>
    </interactant>
    <interactant intactId="EBI-466029">
        <id>P42858</id>
        <label>HTT</label>
    </interactant>
    <organismsDiffer>false</organismsDiffer>
    <experiments>15</experiments>
</comment>
<comment type="interaction">
    <interactant intactId="EBI-8490788">
        <id>Q68EA5</id>
    </interactant>
    <interactant intactId="EBI-10975473">
        <id>O60333-2</id>
        <label>KIF1B</label>
    </interactant>
    <organismsDiffer>false</organismsDiffer>
    <experiments>3</experiments>
</comment>
<comment type="interaction">
    <interactant intactId="EBI-8490788">
        <id>Q68EA5</id>
    </interactant>
    <interactant intactId="EBI-746778">
        <id>Q96A72</id>
        <label>MAGOHB</label>
    </interactant>
    <organismsDiffer>false</organismsDiffer>
    <experiments>3</experiments>
</comment>
<comment type="interaction">
    <interactant intactId="EBI-8490788">
        <id>Q68EA5</id>
    </interactant>
    <interactant intactId="EBI-928842">
        <id>Q9GZM8</id>
        <label>NDEL1</label>
    </interactant>
    <organismsDiffer>false</organismsDiffer>
    <experiments>3</experiments>
</comment>
<comment type="interaction">
    <interactant intactId="EBI-8490788">
        <id>Q68EA5</id>
    </interactant>
    <interactant intactId="EBI-475646">
        <id>P07196</id>
        <label>NEFL</label>
    </interactant>
    <organismsDiffer>false</organismsDiffer>
    <experiments>3</experiments>
</comment>
<comment type="interaction">
    <interactant intactId="EBI-8490788">
        <id>Q68EA5</id>
    </interactant>
    <interactant intactId="EBI-50433196">
        <id>A0A6Q8PF08</id>
        <label>PMP22</label>
    </interactant>
    <organismsDiffer>false</organismsDiffer>
    <experiments>3</experiments>
</comment>
<comment type="interaction">
    <interactant intactId="EBI-8490788">
        <id>Q68EA5</id>
    </interactant>
    <interactant intactId="EBI-749195">
        <id>P60891</id>
        <label>PRPS1</label>
    </interactant>
    <organismsDiffer>false</organismsDiffer>
    <experiments>3</experiments>
</comment>
<comment type="interaction">
    <interactant intactId="EBI-8490788">
        <id>Q68EA5</id>
    </interactant>
    <interactant intactId="EBI-396669">
        <id>Q9Y3C5</id>
        <label>RNF11</label>
    </interactant>
    <organismsDiffer>false</organismsDiffer>
    <experiments>3</experiments>
</comment>
<comment type="interaction">
    <interactant intactId="EBI-8490788">
        <id>Q68EA5</id>
    </interactant>
    <interactant intactId="EBI-985879">
        <id>P37840</id>
        <label>SNCA</label>
    </interactant>
    <organismsDiffer>false</organismsDiffer>
    <experiments>3</experiments>
</comment>
<comment type="interaction">
    <interactant intactId="EBI-8490788">
        <id>Q68EA5</id>
    </interactant>
    <interactant intactId="EBI-5235340">
        <id>Q7Z699</id>
        <label>SPRED1</label>
    </interactant>
    <organismsDiffer>false</organismsDiffer>
    <experiments>3</experiments>
</comment>
<comment type="interaction">
    <interactant intactId="EBI-8490788">
        <id>Q68EA5</id>
    </interactant>
    <interactant intactId="EBI-11097439">
        <id>P26368-2</id>
        <label>U2AF2</label>
    </interactant>
    <organismsDiffer>false</organismsDiffer>
    <experiments>3</experiments>
</comment>
<comment type="interaction">
    <interactant intactId="EBI-8490788">
        <id>Q68EA5</id>
    </interactant>
    <interactant intactId="EBI-720609">
        <id>O76024</id>
        <label>WFS1</label>
    </interactant>
    <organismsDiffer>false</organismsDiffer>
    <experiments>3</experiments>
</comment>
<comment type="interaction">
    <interactant intactId="EBI-8490788">
        <id>Q68EA5</id>
    </interactant>
    <interactant intactId="EBI-10177272">
        <id>P15622-3</id>
        <label>ZNF250</label>
    </interactant>
    <organismsDiffer>false</organismsDiffer>
    <experiments>3</experiments>
</comment>
<comment type="interaction">
    <interactant intactId="EBI-8490788">
        <id>Q68EA5</id>
    </interactant>
    <interactant intactId="EBI-10172590">
        <id>Q7Z3I7</id>
        <label>ZNF572</label>
    </interactant>
    <organismsDiffer>false</organismsDiffer>
    <experiments>3</experiments>
</comment>
<comment type="subcellular location">
    <subcellularLocation>
        <location evidence="3">Nucleus</location>
    </subcellularLocation>
</comment>
<comment type="similarity">
    <text evidence="3">Belongs to the krueppel C2H2-type zinc-finger protein family.</text>
</comment>